<feature type="initiator methionine" description="Removed">
    <location>
        <position position="1"/>
    </location>
</feature>
<feature type="chain" id="PRO_0000162255" description="Dihydrolipoyllysine-residue succinyltransferase component of 2-oxoglutarate dehydrogenase complex">
    <location>
        <begin position="2"/>
        <end position="399"/>
    </location>
</feature>
<feature type="domain" description="Lipoyl-binding" evidence="2">
    <location>
        <begin position="2"/>
        <end position="77"/>
    </location>
</feature>
<feature type="domain" description="Peripheral subunit-binding (PSBD)" evidence="3">
    <location>
        <begin position="104"/>
        <end position="141"/>
    </location>
</feature>
<feature type="active site" evidence="1">
    <location>
        <position position="370"/>
    </location>
</feature>
<feature type="active site" evidence="1">
    <location>
        <position position="374"/>
    </location>
</feature>
<feature type="modified residue" description="N6-lipoyllysine" evidence="2">
    <location>
        <position position="43"/>
    </location>
</feature>
<feature type="strand" evidence="5">
    <location>
        <begin position="3"/>
        <end position="6"/>
    </location>
</feature>
<feature type="strand" evidence="5">
    <location>
        <begin position="17"/>
        <end position="19"/>
    </location>
</feature>
<feature type="strand" evidence="5">
    <location>
        <begin position="28"/>
        <end position="30"/>
    </location>
</feature>
<feature type="strand" evidence="5">
    <location>
        <begin position="35"/>
        <end position="40"/>
    </location>
</feature>
<feature type="strand" evidence="5">
    <location>
        <begin position="45"/>
        <end position="49"/>
    </location>
</feature>
<feature type="strand" evidence="5">
    <location>
        <begin position="54"/>
        <end position="61"/>
    </location>
</feature>
<feature type="strand" evidence="5">
    <location>
        <begin position="72"/>
        <end position="76"/>
    </location>
</feature>
<name>ODO2_AZOVI</name>
<evidence type="ECO:0000250" key="1">
    <source>
        <dbReference type="UniProtKB" id="P0AFG6"/>
    </source>
</evidence>
<evidence type="ECO:0000255" key="2">
    <source>
        <dbReference type="PROSITE-ProRule" id="PRU01066"/>
    </source>
</evidence>
<evidence type="ECO:0000255" key="3">
    <source>
        <dbReference type="PROSITE-ProRule" id="PRU01170"/>
    </source>
</evidence>
<evidence type="ECO:0000305" key="4"/>
<evidence type="ECO:0007829" key="5">
    <source>
        <dbReference type="PDB" id="1GHJ"/>
    </source>
</evidence>
<accession>P20708</accession>
<accession>Q44474</accession>
<reference key="1">
    <citation type="journal article" date="1990" name="Eur. J. Biochem.">
        <title>The 2-oxoglutarate dehydrogenase complex from Azotobacter vinelandii. 2. Molecular cloning and sequence analysis of the gene encoding the succinyltransferase component.</title>
        <authorList>
            <person name="Westphal A.H."/>
            <person name="de Kok A."/>
        </authorList>
    </citation>
    <scope>NUCLEOTIDE SEQUENCE [GENOMIC DNA]</scope>
    <source>
        <strain>ATCC 478 / DSM 2289 / BCRC 14361 / JCM 21475 / KCTC 12137 / NBRC 102612 / NCIMB 12096 / NRRL B-14641 / VKM B-1617 / NRS 16</strain>
    </source>
</reference>
<reference key="2">
    <citation type="journal article" date="1988" name="Eur. J. Biochem.">
        <title>Lipoamide dehydrogenase from Azotobacter vinelandii. Molecular cloning, organization and sequence analysis of the gene.</title>
        <authorList>
            <person name="Westphal A.H."/>
            <person name="de Kok A."/>
        </authorList>
    </citation>
    <scope>NUCLEOTIDE SEQUENCE [GENOMIC DNA] OF 354-399</scope>
    <source>
        <strain>ATCC 478 / DSM 2289 / BCRC 14361 / JCM 21475 / KCTC 12137 / NBRC 102612 / NCIMB 12096 / NRRL B-14641 / VKM B-1617 / NRS 16</strain>
    </source>
</reference>
<reference key="3">
    <citation type="journal article" date="1990" name="Eur. J. Biochem.">
        <title>The 2-oxoglutarate dehydrogenase complex from Azotobacter vinelandii. 1. Molecular cloning and sequence analysis of the gene encoding the 2-oxoglutarate dehydrogenase component.</title>
        <authorList>
            <person name="Schulze E."/>
            <person name="Westphal A.H."/>
            <person name="Hanemaaijer R."/>
            <person name="de Kok A."/>
        </authorList>
    </citation>
    <scope>NUCLEOTIDE SEQUENCE [GENOMIC DNA] OF 1-30</scope>
    <source>
        <strain>ATCC 478 / DSM 2289 / BCRC 14361 / JCM 21475 / KCTC 12137 / NBRC 102612 / NCIMB 12096 / NRRL B-14641 / VKM B-1617 / NRS 16</strain>
    </source>
</reference>
<reference key="4">
    <citation type="journal article" date="1995" name="Eur. J. Biochem.">
        <title>Sequential 1H and 15N nuclear magnetic resonance assignments and secondary structure of the lipoyl domain of the 2-oxoglutarate dehydrogenase complex from Azotobacter vinelandii. Evidence for high structural similarity with the lipoyl domain of the pyruvate dehydrogenase complex.</title>
        <authorList>
            <person name="Berg A."/>
            <person name="Smits O."/>
            <person name="de Kok A."/>
            <person name="Vervoort J."/>
        </authorList>
    </citation>
    <scope>STRUCTURE BY NMR OF 1-80</scope>
</reference>
<reference key="5">
    <citation type="journal article" date="1996" name="J. Mol. Biol.">
        <title>Solution structure of the lipoyl domain of the 2-oxoglutarate dehydrogenase complex from Azotobacter vinelandii.</title>
        <authorList>
            <person name="Berg A."/>
            <person name="Vervoort J."/>
            <person name="de Kok A."/>
        </authorList>
    </citation>
    <scope>STRUCTURE BY NMR OF 1-78</scope>
</reference>
<sequence>MAIDIKAPTFPESIADGTVATWHKKPGEPVKRDELIVDIETDKVVMEVLAEADGVIAEIVKNEGDTVLSGELLGKLTEGGAATAAPAAAPAPAAAAPAAAEAPILSPAARKIAEENAIAADSITGTGKGGRVTKEDAVAAAEAKKSAPAGQPAPAATAAPLFAAGDRVEKRVPMTRLRAKVAERLVEAQSSMAMLTTFNEVNMKPVMELRAKYKDLFEKTHNGVRLGFMSFFVKAAVEALKRQPGVNASIDGNDIVYHGYQDIGVAVSSDRGLVVPVLRNAEFMSLAEIEGGINEFGKKAKAGKLTIEEMTGGTFTISNGGVFGSLLSTPIVNPPQTAILGMHKIQERPMAVNGQVVILPMMYLALSYDHRLIDGKEAVTFLVTMKDLLEDPARLLLDV</sequence>
<comment type="function">
    <text evidence="1">E2 component of the 2-oxoglutarate dehydrogenase (OGDH) complex which catalyzes the second step in the conversion of 2-oxoglutarate to succinyl-CoA and CO(2).</text>
</comment>
<comment type="catalytic activity">
    <reaction evidence="1">
        <text>N(6)-[(R)-dihydrolipoyl]-L-lysyl-[protein] + succinyl-CoA = N(6)-[(R)-S(8)-succinyldihydrolipoyl]-L-lysyl-[protein] + CoA</text>
        <dbReference type="Rhea" id="RHEA:15213"/>
        <dbReference type="Rhea" id="RHEA-COMP:10475"/>
        <dbReference type="Rhea" id="RHEA-COMP:20092"/>
        <dbReference type="ChEBI" id="CHEBI:57287"/>
        <dbReference type="ChEBI" id="CHEBI:57292"/>
        <dbReference type="ChEBI" id="CHEBI:83100"/>
        <dbReference type="ChEBI" id="CHEBI:83120"/>
        <dbReference type="EC" id="2.3.1.61"/>
    </reaction>
</comment>
<comment type="cofactor">
    <cofactor>
        <name>(R)-lipoate</name>
        <dbReference type="ChEBI" id="CHEBI:83088"/>
    </cofactor>
    <text>Binds 1 lipoyl cofactor covalently.</text>
</comment>
<comment type="pathway">
    <text>Amino-acid degradation; L-lysine degradation via saccharopine pathway; glutaryl-CoA from L-lysine: step 6/6.</text>
</comment>
<comment type="subunit">
    <text evidence="1">Forms a 24-polypeptide structural core with octahedral symmetry. Part of the 2-oxoglutarate dehydrogenase (OGDH) complex composed of E1 (2-oxoglutarate dehydrogenase), E2 (dihydrolipoamide succinyltransferase) and E3 (dihydrolipoamide dehydrogenase); the complex contains multiple copies of the three enzymatic components (E1, E2 and E3).</text>
</comment>
<comment type="similarity">
    <text evidence="4">Belongs to the 2-oxoacid dehydrogenase family.</text>
</comment>
<protein>
    <recommendedName>
        <fullName>Dihydrolipoyllysine-residue succinyltransferase component of 2-oxoglutarate dehydrogenase complex</fullName>
        <ecNumber evidence="1">2.3.1.61</ecNumber>
    </recommendedName>
    <alternativeName>
        <fullName>2-oxoglutarate dehydrogenase complex component E2</fullName>
        <shortName>OGDC-E2</shortName>
    </alternativeName>
    <alternativeName>
        <fullName>Dihydrolipoamide succinyltransferase component of 2-oxoglutarate dehydrogenase complex</fullName>
    </alternativeName>
</protein>
<keyword id="KW-0002">3D-structure</keyword>
<keyword id="KW-0012">Acyltransferase</keyword>
<keyword id="KW-0450">Lipoyl</keyword>
<keyword id="KW-0808">Transferase</keyword>
<keyword id="KW-0816">Tricarboxylic acid cycle</keyword>
<organism>
    <name type="scientific">Azotobacter vinelandii</name>
    <dbReference type="NCBI Taxonomy" id="354"/>
    <lineage>
        <taxon>Bacteria</taxon>
        <taxon>Pseudomonadati</taxon>
        <taxon>Pseudomonadota</taxon>
        <taxon>Gammaproteobacteria</taxon>
        <taxon>Pseudomonadales</taxon>
        <taxon>Pseudomonadaceae</taxon>
        <taxon>Azotobacter</taxon>
    </lineage>
</organism>
<dbReference type="EC" id="2.3.1.61" evidence="1"/>
<dbReference type="EMBL" id="M37307">
    <property type="protein sequence ID" value="AAA22138.1"/>
    <property type="status" value="ALT_SEQ"/>
    <property type="molecule type" value="Genomic_DNA"/>
</dbReference>
<dbReference type="EMBL" id="X52432">
    <property type="protein sequence ID" value="CAA36678.1"/>
    <property type="molecule type" value="Genomic_DNA"/>
</dbReference>
<dbReference type="EMBL" id="X52433">
    <property type="protein sequence ID" value="CAA36681.1"/>
    <property type="molecule type" value="Genomic_DNA"/>
</dbReference>
<dbReference type="PIR" id="S07779">
    <property type="entry name" value="S07779"/>
</dbReference>
<dbReference type="PDB" id="1GHJ">
    <property type="method" value="NMR"/>
    <property type="chains" value="A=2-80"/>
</dbReference>
<dbReference type="PDB" id="1GHK">
    <property type="method" value="NMR"/>
    <property type="chains" value="A=2-80"/>
</dbReference>
<dbReference type="PDBsum" id="1GHJ"/>
<dbReference type="PDBsum" id="1GHK"/>
<dbReference type="SMR" id="P20708"/>
<dbReference type="BRENDA" id="2.3.1.61">
    <property type="organism ID" value="49"/>
</dbReference>
<dbReference type="SABIO-RK" id="P20708"/>
<dbReference type="UniPathway" id="UPA00868">
    <property type="reaction ID" value="UER00840"/>
</dbReference>
<dbReference type="EvolutionaryTrace" id="P20708"/>
<dbReference type="GO" id="GO:0005829">
    <property type="term" value="C:cytosol"/>
    <property type="evidence" value="ECO:0007669"/>
    <property type="project" value="TreeGrafter"/>
</dbReference>
<dbReference type="GO" id="GO:0045252">
    <property type="term" value="C:oxoglutarate dehydrogenase complex"/>
    <property type="evidence" value="ECO:0007669"/>
    <property type="project" value="InterPro"/>
</dbReference>
<dbReference type="GO" id="GO:0004149">
    <property type="term" value="F:dihydrolipoyllysine-residue succinyltransferase activity"/>
    <property type="evidence" value="ECO:0007669"/>
    <property type="project" value="UniProtKB-EC"/>
</dbReference>
<dbReference type="GO" id="GO:0033512">
    <property type="term" value="P:L-lysine catabolic process to acetyl-CoA via saccharopine"/>
    <property type="evidence" value="ECO:0007669"/>
    <property type="project" value="UniProtKB-UniPathway"/>
</dbReference>
<dbReference type="GO" id="GO:0006099">
    <property type="term" value="P:tricarboxylic acid cycle"/>
    <property type="evidence" value="ECO:0007669"/>
    <property type="project" value="UniProtKB-KW"/>
</dbReference>
<dbReference type="CDD" id="cd06849">
    <property type="entry name" value="lipoyl_domain"/>
    <property type="match status" value="1"/>
</dbReference>
<dbReference type="FunFam" id="3.30.559.10:FF:000007">
    <property type="entry name" value="Dihydrolipoamide acetyltransferase component of pyruvate dehydrogenase complex"/>
    <property type="match status" value="1"/>
</dbReference>
<dbReference type="Gene3D" id="2.40.50.100">
    <property type="match status" value="1"/>
</dbReference>
<dbReference type="Gene3D" id="3.30.559.10">
    <property type="entry name" value="Chloramphenicol acetyltransferase-like domain"/>
    <property type="match status" value="1"/>
</dbReference>
<dbReference type="Gene3D" id="4.10.320.10">
    <property type="entry name" value="E3-binding domain"/>
    <property type="match status" value="1"/>
</dbReference>
<dbReference type="InterPro" id="IPR003016">
    <property type="entry name" value="2-oxoA_DH_lipoyl-BS"/>
</dbReference>
<dbReference type="InterPro" id="IPR050537">
    <property type="entry name" value="2-oxoacid_dehydrogenase"/>
</dbReference>
<dbReference type="InterPro" id="IPR001078">
    <property type="entry name" value="2-oxoacid_DH_actylTfrase"/>
</dbReference>
<dbReference type="InterPro" id="IPR000089">
    <property type="entry name" value="Biotin_lipoyl"/>
</dbReference>
<dbReference type="InterPro" id="IPR023213">
    <property type="entry name" value="CAT-like_dom_sf"/>
</dbReference>
<dbReference type="InterPro" id="IPR036625">
    <property type="entry name" value="E3-bd_dom_sf"/>
</dbReference>
<dbReference type="InterPro" id="IPR004167">
    <property type="entry name" value="PSBD"/>
</dbReference>
<dbReference type="InterPro" id="IPR011053">
    <property type="entry name" value="Single_hybrid_motif"/>
</dbReference>
<dbReference type="InterPro" id="IPR006255">
    <property type="entry name" value="SucB"/>
</dbReference>
<dbReference type="NCBIfam" id="NF004309">
    <property type="entry name" value="PRK05704.1"/>
    <property type="match status" value="1"/>
</dbReference>
<dbReference type="NCBIfam" id="TIGR01347">
    <property type="entry name" value="sucB"/>
    <property type="match status" value="1"/>
</dbReference>
<dbReference type="PANTHER" id="PTHR43416:SF5">
    <property type="entry name" value="DIHYDROLIPOYLLYSINE-RESIDUE SUCCINYLTRANSFERASE COMPONENT OF 2-OXOGLUTARATE DEHYDROGENASE COMPLEX, MITOCHONDRIAL"/>
    <property type="match status" value="1"/>
</dbReference>
<dbReference type="PANTHER" id="PTHR43416">
    <property type="entry name" value="DIHYDROLIPOYLLYSINE-RESIDUE SUCCINYLTRANSFERASE COMPONENT OF 2-OXOGLUTARATE DEHYDROGENASE COMPLEX, MITOCHONDRIAL-RELATED"/>
    <property type="match status" value="1"/>
</dbReference>
<dbReference type="Pfam" id="PF00198">
    <property type="entry name" value="2-oxoacid_dh"/>
    <property type="match status" value="1"/>
</dbReference>
<dbReference type="Pfam" id="PF00364">
    <property type="entry name" value="Biotin_lipoyl"/>
    <property type="match status" value="1"/>
</dbReference>
<dbReference type="Pfam" id="PF02817">
    <property type="entry name" value="E3_binding"/>
    <property type="match status" value="1"/>
</dbReference>
<dbReference type="SUPFAM" id="SSF52777">
    <property type="entry name" value="CoA-dependent acyltransferases"/>
    <property type="match status" value="1"/>
</dbReference>
<dbReference type="SUPFAM" id="SSF47005">
    <property type="entry name" value="Peripheral subunit-binding domain of 2-oxo acid dehydrogenase complex"/>
    <property type="match status" value="1"/>
</dbReference>
<dbReference type="SUPFAM" id="SSF51230">
    <property type="entry name" value="Single hybrid motif"/>
    <property type="match status" value="1"/>
</dbReference>
<dbReference type="PROSITE" id="PS50968">
    <property type="entry name" value="BIOTINYL_LIPOYL"/>
    <property type="match status" value="1"/>
</dbReference>
<dbReference type="PROSITE" id="PS00189">
    <property type="entry name" value="LIPOYL"/>
    <property type="match status" value="1"/>
</dbReference>
<dbReference type="PROSITE" id="PS51826">
    <property type="entry name" value="PSBD"/>
    <property type="match status" value="1"/>
</dbReference>
<gene>
    <name type="primary">sucB</name>
    <name type="synonym">odhB</name>
</gene>
<proteinExistence type="evidence at protein level"/>